<feature type="chain" id="PRO_0000230086" description="Transcriptional regulator MraZ">
    <location>
        <begin position="1"/>
        <end position="158"/>
    </location>
</feature>
<feature type="domain" description="SpoVT-AbrB 1" evidence="2">
    <location>
        <begin position="5"/>
        <end position="50"/>
    </location>
</feature>
<feature type="domain" description="SpoVT-AbrB 2" evidence="2">
    <location>
        <begin position="91"/>
        <end position="134"/>
    </location>
</feature>
<reference key="1">
    <citation type="journal article" date="2009" name="BMC Microbiol.">
        <title>The genome sequence of Geobacter metallireducens: features of metabolism, physiology and regulation common and dissimilar to Geobacter sulfurreducens.</title>
        <authorList>
            <person name="Aklujkar M."/>
            <person name="Krushkal J."/>
            <person name="DiBartolo G."/>
            <person name="Lapidus A."/>
            <person name="Land M.L."/>
            <person name="Lovley D.R."/>
        </authorList>
    </citation>
    <scope>NUCLEOTIDE SEQUENCE [LARGE SCALE GENOMIC DNA]</scope>
    <source>
        <strain>ATCC 53774 / DSM 7210 / GS-15</strain>
    </source>
</reference>
<proteinExistence type="inferred from homology"/>
<organism>
    <name type="scientific">Geobacter metallireducens (strain ATCC 53774 / DSM 7210 / GS-15)</name>
    <dbReference type="NCBI Taxonomy" id="269799"/>
    <lineage>
        <taxon>Bacteria</taxon>
        <taxon>Pseudomonadati</taxon>
        <taxon>Thermodesulfobacteriota</taxon>
        <taxon>Desulfuromonadia</taxon>
        <taxon>Geobacterales</taxon>
        <taxon>Geobacteraceae</taxon>
        <taxon>Geobacter</taxon>
    </lineage>
</organism>
<sequence length="158" mass="17703">MFRGIYETTIDAKGRTSLPARFRDVLVESFGDERFFVTNSVPVDLGGGVYSSGLLIFPYQEWFIFEESFLNGKGLTSAQRNSIMRTIVAPAVECSADKLGRVLVPPHLRKNAVLEREILFVGAMKKVEIWSQSEWDKVRAHDMKAFPSDSEAVAELGL</sequence>
<keyword id="KW-0963">Cytoplasm</keyword>
<keyword id="KW-0238">DNA-binding</keyword>
<keyword id="KW-1185">Reference proteome</keyword>
<keyword id="KW-0677">Repeat</keyword>
<keyword id="KW-0804">Transcription</keyword>
<keyword id="KW-0805">Transcription regulation</keyword>
<comment type="subunit">
    <text evidence="1">Forms oligomers.</text>
</comment>
<comment type="subcellular location">
    <subcellularLocation>
        <location evidence="1">Cytoplasm</location>
        <location evidence="1">Nucleoid</location>
    </subcellularLocation>
</comment>
<comment type="similarity">
    <text evidence="1">Belongs to the MraZ family.</text>
</comment>
<dbReference type="EMBL" id="CP000148">
    <property type="protein sequence ID" value="ABB30646.1"/>
    <property type="molecule type" value="Genomic_DNA"/>
</dbReference>
<dbReference type="RefSeq" id="WP_011365663.1">
    <property type="nucleotide sequence ID" value="NC_007517.1"/>
</dbReference>
<dbReference type="SMR" id="Q39YM8"/>
<dbReference type="STRING" id="269799.Gmet_0403"/>
<dbReference type="KEGG" id="gme:Gmet_0403"/>
<dbReference type="eggNOG" id="COG2001">
    <property type="taxonomic scope" value="Bacteria"/>
</dbReference>
<dbReference type="HOGENOM" id="CLU_107907_0_5_7"/>
<dbReference type="Proteomes" id="UP000007073">
    <property type="component" value="Chromosome"/>
</dbReference>
<dbReference type="GO" id="GO:0005737">
    <property type="term" value="C:cytoplasm"/>
    <property type="evidence" value="ECO:0007669"/>
    <property type="project" value="UniProtKB-UniRule"/>
</dbReference>
<dbReference type="GO" id="GO:0009295">
    <property type="term" value="C:nucleoid"/>
    <property type="evidence" value="ECO:0007669"/>
    <property type="project" value="UniProtKB-SubCell"/>
</dbReference>
<dbReference type="GO" id="GO:0003700">
    <property type="term" value="F:DNA-binding transcription factor activity"/>
    <property type="evidence" value="ECO:0007669"/>
    <property type="project" value="UniProtKB-UniRule"/>
</dbReference>
<dbReference type="GO" id="GO:0000976">
    <property type="term" value="F:transcription cis-regulatory region binding"/>
    <property type="evidence" value="ECO:0007669"/>
    <property type="project" value="TreeGrafter"/>
</dbReference>
<dbReference type="GO" id="GO:2000143">
    <property type="term" value="P:negative regulation of DNA-templated transcription initiation"/>
    <property type="evidence" value="ECO:0007669"/>
    <property type="project" value="TreeGrafter"/>
</dbReference>
<dbReference type="CDD" id="cd16321">
    <property type="entry name" value="MraZ_C"/>
    <property type="match status" value="1"/>
</dbReference>
<dbReference type="CDD" id="cd16320">
    <property type="entry name" value="MraZ_N"/>
    <property type="match status" value="1"/>
</dbReference>
<dbReference type="Gene3D" id="3.40.1550.20">
    <property type="entry name" value="Transcriptional regulator MraZ domain"/>
    <property type="match status" value="1"/>
</dbReference>
<dbReference type="HAMAP" id="MF_01008">
    <property type="entry name" value="MraZ"/>
    <property type="match status" value="1"/>
</dbReference>
<dbReference type="InterPro" id="IPR003444">
    <property type="entry name" value="MraZ"/>
</dbReference>
<dbReference type="InterPro" id="IPR035644">
    <property type="entry name" value="MraZ_C"/>
</dbReference>
<dbReference type="InterPro" id="IPR020603">
    <property type="entry name" value="MraZ_dom"/>
</dbReference>
<dbReference type="InterPro" id="IPR035642">
    <property type="entry name" value="MraZ_N"/>
</dbReference>
<dbReference type="InterPro" id="IPR038619">
    <property type="entry name" value="MraZ_sf"/>
</dbReference>
<dbReference type="InterPro" id="IPR007159">
    <property type="entry name" value="SpoVT-AbrB_dom"/>
</dbReference>
<dbReference type="InterPro" id="IPR037914">
    <property type="entry name" value="SpoVT-AbrB_sf"/>
</dbReference>
<dbReference type="NCBIfam" id="TIGR00242">
    <property type="entry name" value="division/cell wall cluster transcriptional repressor MraZ"/>
    <property type="match status" value="1"/>
</dbReference>
<dbReference type="NCBIfam" id="NF001482">
    <property type="entry name" value="PRK00326.3-4"/>
    <property type="match status" value="1"/>
</dbReference>
<dbReference type="PANTHER" id="PTHR34701">
    <property type="entry name" value="TRANSCRIPTIONAL REGULATOR MRAZ"/>
    <property type="match status" value="1"/>
</dbReference>
<dbReference type="PANTHER" id="PTHR34701:SF1">
    <property type="entry name" value="TRANSCRIPTIONAL REGULATOR MRAZ"/>
    <property type="match status" value="1"/>
</dbReference>
<dbReference type="Pfam" id="PF02381">
    <property type="entry name" value="MraZ"/>
    <property type="match status" value="2"/>
</dbReference>
<dbReference type="SUPFAM" id="SSF89447">
    <property type="entry name" value="AbrB/MazE/MraZ-like"/>
    <property type="match status" value="1"/>
</dbReference>
<dbReference type="PROSITE" id="PS51740">
    <property type="entry name" value="SPOVT_ABRB"/>
    <property type="match status" value="2"/>
</dbReference>
<gene>
    <name evidence="1" type="primary">mraZ</name>
    <name type="ordered locus">Gmet_0403</name>
</gene>
<protein>
    <recommendedName>
        <fullName>Transcriptional regulator MraZ</fullName>
    </recommendedName>
</protein>
<accession>Q39YM8</accession>
<evidence type="ECO:0000255" key="1">
    <source>
        <dbReference type="HAMAP-Rule" id="MF_01008"/>
    </source>
</evidence>
<evidence type="ECO:0000255" key="2">
    <source>
        <dbReference type="PROSITE-ProRule" id="PRU01076"/>
    </source>
</evidence>
<name>MRAZ_GEOMG</name>